<sequence>MRSDTIKKGVERTPHRALIKGTGVPQSQMDKPFIGVATSFTDLIPGHVGMRDLERFIEKGIHSGGGYAFFFGIPGVCDGISMGHKGMHYSLPTRELIADMVESVAEAHRLDGLVLLTNCDKITPGMLMAAARLNIPSIVVTAGPMMAGRGTEGRRYSFVTDTFEAMARYKAGVIDERELGVCEDNACPGMGSCQGLFTANTMAILTETMGMSLPRCGTALAVSALKRRIAFASGEKIVDLVRNDITPRQILTRDAFENAIRVDLALGGSSNTVLHLLAIAREAGVDLPLETFDTLAKETPQISSMNPAGEYFMEDLDAGGGVMGVLRQLGSLVRDNPTVMGLSTLQLASTVESVDERVIRPLSNPVKKEGGIAVLFGNLAPKGAVVKQSGVSDAMMTFEGTARCFDSEEAAMAALMGGRIVAGDVVVIRYEGPKGGPGMREMLAPTATLMGLGLGDSVALITDGRFSGGTRGPCIGHISPEAAEGGPIALVEEGDRILLDIPNRRLELLVDEAVLQERRARWTAPEPKIKTGWLARYAKVVTSAYTGAVTSAD</sequence>
<dbReference type="EC" id="4.2.1.9" evidence="1"/>
<dbReference type="EMBL" id="AE017180">
    <property type="protein sequence ID" value="AAR35288.1"/>
    <property type="molecule type" value="Genomic_DNA"/>
</dbReference>
<dbReference type="RefSeq" id="NP_952961.1">
    <property type="nucleotide sequence ID" value="NC_002939.5"/>
</dbReference>
<dbReference type="RefSeq" id="WP_010942557.1">
    <property type="nucleotide sequence ID" value="NC_002939.5"/>
</dbReference>
<dbReference type="SMR" id="Q74BW7"/>
<dbReference type="FunCoup" id="Q74BW7">
    <property type="interactions" value="491"/>
</dbReference>
<dbReference type="STRING" id="243231.GSU1912"/>
<dbReference type="EnsemblBacteria" id="AAR35288">
    <property type="protein sequence ID" value="AAR35288"/>
    <property type="gene ID" value="GSU1912"/>
</dbReference>
<dbReference type="KEGG" id="gsu:GSU1912"/>
<dbReference type="PATRIC" id="fig|243231.5.peg.1950"/>
<dbReference type="eggNOG" id="COG0129">
    <property type="taxonomic scope" value="Bacteria"/>
</dbReference>
<dbReference type="HOGENOM" id="CLU_014271_4_2_7"/>
<dbReference type="InParanoid" id="Q74BW7"/>
<dbReference type="OrthoDB" id="9807077at2"/>
<dbReference type="UniPathway" id="UPA00047">
    <property type="reaction ID" value="UER00057"/>
</dbReference>
<dbReference type="UniPathway" id="UPA00049">
    <property type="reaction ID" value="UER00061"/>
</dbReference>
<dbReference type="Proteomes" id="UP000000577">
    <property type="component" value="Chromosome"/>
</dbReference>
<dbReference type="GO" id="GO:0005829">
    <property type="term" value="C:cytosol"/>
    <property type="evidence" value="ECO:0000318"/>
    <property type="project" value="GO_Central"/>
</dbReference>
<dbReference type="GO" id="GO:0051537">
    <property type="term" value="F:2 iron, 2 sulfur cluster binding"/>
    <property type="evidence" value="ECO:0007669"/>
    <property type="project" value="UniProtKB-UniRule"/>
</dbReference>
<dbReference type="GO" id="GO:0004160">
    <property type="term" value="F:dihydroxy-acid dehydratase activity"/>
    <property type="evidence" value="ECO:0007669"/>
    <property type="project" value="UniProtKB-UniRule"/>
</dbReference>
<dbReference type="GO" id="GO:0016836">
    <property type="term" value="F:hydro-lyase activity"/>
    <property type="evidence" value="ECO:0000318"/>
    <property type="project" value="GO_Central"/>
</dbReference>
<dbReference type="GO" id="GO:0000287">
    <property type="term" value="F:magnesium ion binding"/>
    <property type="evidence" value="ECO:0007669"/>
    <property type="project" value="UniProtKB-UniRule"/>
</dbReference>
<dbReference type="GO" id="GO:0009097">
    <property type="term" value="P:isoleucine biosynthetic process"/>
    <property type="evidence" value="ECO:0007669"/>
    <property type="project" value="UniProtKB-UniRule"/>
</dbReference>
<dbReference type="GO" id="GO:0009099">
    <property type="term" value="P:L-valine biosynthetic process"/>
    <property type="evidence" value="ECO:0007669"/>
    <property type="project" value="UniProtKB-UniRule"/>
</dbReference>
<dbReference type="FunFam" id="3.50.30.80:FF:000001">
    <property type="entry name" value="Dihydroxy-acid dehydratase"/>
    <property type="match status" value="1"/>
</dbReference>
<dbReference type="Gene3D" id="3.50.30.80">
    <property type="entry name" value="IlvD/EDD C-terminal domain-like"/>
    <property type="match status" value="1"/>
</dbReference>
<dbReference type="HAMAP" id="MF_00012">
    <property type="entry name" value="IlvD"/>
    <property type="match status" value="1"/>
</dbReference>
<dbReference type="InterPro" id="IPR042096">
    <property type="entry name" value="Dihydro-acid_dehy_C"/>
</dbReference>
<dbReference type="InterPro" id="IPR004404">
    <property type="entry name" value="DihydroxyA_deHydtase"/>
</dbReference>
<dbReference type="InterPro" id="IPR020558">
    <property type="entry name" value="DiOHA_6PGluconate_deHydtase_CS"/>
</dbReference>
<dbReference type="InterPro" id="IPR056740">
    <property type="entry name" value="ILV_EDD_C"/>
</dbReference>
<dbReference type="InterPro" id="IPR000581">
    <property type="entry name" value="ILV_EDD_N"/>
</dbReference>
<dbReference type="InterPro" id="IPR037237">
    <property type="entry name" value="IlvD/EDD_N"/>
</dbReference>
<dbReference type="NCBIfam" id="TIGR00110">
    <property type="entry name" value="ilvD"/>
    <property type="match status" value="1"/>
</dbReference>
<dbReference type="NCBIfam" id="NF002068">
    <property type="entry name" value="PRK00911.1"/>
    <property type="match status" value="1"/>
</dbReference>
<dbReference type="PANTHER" id="PTHR43661">
    <property type="entry name" value="D-XYLONATE DEHYDRATASE"/>
    <property type="match status" value="1"/>
</dbReference>
<dbReference type="PANTHER" id="PTHR43661:SF3">
    <property type="entry name" value="D-XYLONATE DEHYDRATASE YAGF-RELATED"/>
    <property type="match status" value="1"/>
</dbReference>
<dbReference type="Pfam" id="PF24877">
    <property type="entry name" value="ILV_EDD_C"/>
    <property type="match status" value="1"/>
</dbReference>
<dbReference type="Pfam" id="PF00920">
    <property type="entry name" value="ILVD_EDD_N"/>
    <property type="match status" value="1"/>
</dbReference>
<dbReference type="SUPFAM" id="SSF143975">
    <property type="entry name" value="IlvD/EDD N-terminal domain-like"/>
    <property type="match status" value="1"/>
</dbReference>
<dbReference type="SUPFAM" id="SSF52016">
    <property type="entry name" value="LeuD/IlvD-like"/>
    <property type="match status" value="1"/>
</dbReference>
<dbReference type="PROSITE" id="PS00886">
    <property type="entry name" value="ILVD_EDD_1"/>
    <property type="match status" value="1"/>
</dbReference>
<dbReference type="PROSITE" id="PS00887">
    <property type="entry name" value="ILVD_EDD_2"/>
    <property type="match status" value="1"/>
</dbReference>
<comment type="function">
    <text evidence="1">Functions in the biosynthesis of branched-chain amino acids. Catalyzes the dehydration of (2R,3R)-2,3-dihydroxy-3-methylpentanoate (2,3-dihydroxy-3-methylvalerate) into 2-oxo-3-methylpentanoate (2-oxo-3-methylvalerate) and of (2R)-2,3-dihydroxy-3-methylbutanoate (2,3-dihydroxyisovalerate) into 2-oxo-3-methylbutanoate (2-oxoisovalerate), the penultimate precursor to L-isoleucine and L-valine, respectively.</text>
</comment>
<comment type="catalytic activity">
    <reaction evidence="1">
        <text>(2R)-2,3-dihydroxy-3-methylbutanoate = 3-methyl-2-oxobutanoate + H2O</text>
        <dbReference type="Rhea" id="RHEA:24809"/>
        <dbReference type="ChEBI" id="CHEBI:11851"/>
        <dbReference type="ChEBI" id="CHEBI:15377"/>
        <dbReference type="ChEBI" id="CHEBI:49072"/>
        <dbReference type="EC" id="4.2.1.9"/>
    </reaction>
    <physiologicalReaction direction="left-to-right" evidence="1">
        <dbReference type="Rhea" id="RHEA:24810"/>
    </physiologicalReaction>
</comment>
<comment type="catalytic activity">
    <reaction evidence="1">
        <text>(2R,3R)-2,3-dihydroxy-3-methylpentanoate = (S)-3-methyl-2-oxopentanoate + H2O</text>
        <dbReference type="Rhea" id="RHEA:27694"/>
        <dbReference type="ChEBI" id="CHEBI:15377"/>
        <dbReference type="ChEBI" id="CHEBI:35146"/>
        <dbReference type="ChEBI" id="CHEBI:49258"/>
        <dbReference type="EC" id="4.2.1.9"/>
    </reaction>
    <physiologicalReaction direction="left-to-right" evidence="1">
        <dbReference type="Rhea" id="RHEA:27695"/>
    </physiologicalReaction>
</comment>
<comment type="cofactor">
    <cofactor evidence="1">
        <name>[2Fe-2S] cluster</name>
        <dbReference type="ChEBI" id="CHEBI:190135"/>
    </cofactor>
    <text evidence="1">Binds 1 [2Fe-2S] cluster per subunit. This cluster acts as a Lewis acid cofactor.</text>
</comment>
<comment type="cofactor">
    <cofactor evidence="1">
        <name>Mg(2+)</name>
        <dbReference type="ChEBI" id="CHEBI:18420"/>
    </cofactor>
</comment>
<comment type="pathway">
    <text evidence="1">Amino-acid biosynthesis; L-isoleucine biosynthesis; L-isoleucine from 2-oxobutanoate: step 3/4.</text>
</comment>
<comment type="pathway">
    <text evidence="1">Amino-acid biosynthesis; L-valine biosynthesis; L-valine from pyruvate: step 3/4.</text>
</comment>
<comment type="subunit">
    <text evidence="1">Homodimer.</text>
</comment>
<comment type="similarity">
    <text evidence="1">Belongs to the IlvD/Edd family.</text>
</comment>
<feature type="chain" id="PRO_0000225394" description="Dihydroxy-acid dehydratase">
    <location>
        <begin position="1"/>
        <end position="553"/>
    </location>
</feature>
<feature type="active site" description="Proton acceptor" evidence="1">
    <location>
        <position position="467"/>
    </location>
</feature>
<feature type="binding site" evidence="1">
    <location>
        <position position="78"/>
    </location>
    <ligand>
        <name>Mg(2+)</name>
        <dbReference type="ChEBI" id="CHEBI:18420"/>
    </ligand>
</feature>
<feature type="binding site" evidence="1">
    <location>
        <position position="119"/>
    </location>
    <ligand>
        <name>[2Fe-2S] cluster</name>
        <dbReference type="ChEBI" id="CHEBI:190135"/>
    </ligand>
</feature>
<feature type="binding site" evidence="1">
    <location>
        <position position="120"/>
    </location>
    <ligand>
        <name>Mg(2+)</name>
        <dbReference type="ChEBI" id="CHEBI:18420"/>
    </ligand>
</feature>
<feature type="binding site" description="via carbamate group" evidence="1">
    <location>
        <position position="121"/>
    </location>
    <ligand>
        <name>Mg(2+)</name>
        <dbReference type="ChEBI" id="CHEBI:18420"/>
    </ligand>
</feature>
<feature type="binding site" evidence="1">
    <location>
        <position position="193"/>
    </location>
    <ligand>
        <name>[2Fe-2S] cluster</name>
        <dbReference type="ChEBI" id="CHEBI:190135"/>
    </ligand>
</feature>
<feature type="binding site" evidence="1">
    <location>
        <position position="441"/>
    </location>
    <ligand>
        <name>Mg(2+)</name>
        <dbReference type="ChEBI" id="CHEBI:18420"/>
    </ligand>
</feature>
<feature type="modified residue" description="N6-carboxylysine" evidence="1">
    <location>
        <position position="121"/>
    </location>
</feature>
<gene>
    <name evidence="1" type="primary">ilvD</name>
    <name type="ordered locus">GSU1912</name>
</gene>
<name>ILVD_GEOSL</name>
<keyword id="KW-0001">2Fe-2S</keyword>
<keyword id="KW-0028">Amino-acid biosynthesis</keyword>
<keyword id="KW-0100">Branched-chain amino acid biosynthesis</keyword>
<keyword id="KW-0408">Iron</keyword>
<keyword id="KW-0411">Iron-sulfur</keyword>
<keyword id="KW-0456">Lyase</keyword>
<keyword id="KW-0460">Magnesium</keyword>
<keyword id="KW-0479">Metal-binding</keyword>
<keyword id="KW-1185">Reference proteome</keyword>
<reference key="1">
    <citation type="journal article" date="2003" name="Science">
        <title>Genome of Geobacter sulfurreducens: metal reduction in subsurface environments.</title>
        <authorList>
            <person name="Methe B.A."/>
            <person name="Nelson K.E."/>
            <person name="Eisen J.A."/>
            <person name="Paulsen I.T."/>
            <person name="Nelson W.C."/>
            <person name="Heidelberg J.F."/>
            <person name="Wu D."/>
            <person name="Wu M."/>
            <person name="Ward N.L."/>
            <person name="Beanan M.J."/>
            <person name="Dodson R.J."/>
            <person name="Madupu R."/>
            <person name="Brinkac L.M."/>
            <person name="Daugherty S.C."/>
            <person name="DeBoy R.T."/>
            <person name="Durkin A.S."/>
            <person name="Gwinn M.L."/>
            <person name="Kolonay J.F."/>
            <person name="Sullivan S.A."/>
            <person name="Haft D.H."/>
            <person name="Selengut J."/>
            <person name="Davidsen T.M."/>
            <person name="Zafar N."/>
            <person name="White O."/>
            <person name="Tran B."/>
            <person name="Romero C."/>
            <person name="Forberger H.A."/>
            <person name="Weidman J.F."/>
            <person name="Khouri H.M."/>
            <person name="Feldblyum T.V."/>
            <person name="Utterback T.R."/>
            <person name="Van Aken S.E."/>
            <person name="Lovley D.R."/>
            <person name="Fraser C.M."/>
        </authorList>
    </citation>
    <scope>NUCLEOTIDE SEQUENCE [LARGE SCALE GENOMIC DNA]</scope>
    <source>
        <strain>ATCC 51573 / DSM 12127 / PCA</strain>
    </source>
</reference>
<evidence type="ECO:0000255" key="1">
    <source>
        <dbReference type="HAMAP-Rule" id="MF_00012"/>
    </source>
</evidence>
<proteinExistence type="inferred from homology"/>
<protein>
    <recommendedName>
        <fullName evidence="1">Dihydroxy-acid dehydratase</fullName>
        <shortName evidence="1">DAD</shortName>
        <ecNumber evidence="1">4.2.1.9</ecNumber>
    </recommendedName>
</protein>
<organism>
    <name type="scientific">Geobacter sulfurreducens (strain ATCC 51573 / DSM 12127 / PCA)</name>
    <dbReference type="NCBI Taxonomy" id="243231"/>
    <lineage>
        <taxon>Bacteria</taxon>
        <taxon>Pseudomonadati</taxon>
        <taxon>Thermodesulfobacteriota</taxon>
        <taxon>Desulfuromonadia</taxon>
        <taxon>Geobacterales</taxon>
        <taxon>Geobacteraceae</taxon>
        <taxon>Geobacter</taxon>
    </lineage>
</organism>
<accession>Q74BW7</accession>